<organism>
    <name type="scientific">Mycobacterium bovis (strain BCG / Tokyo 172 / ATCC 35737 / TMC 1019)</name>
    <dbReference type="NCBI Taxonomy" id="561275"/>
    <lineage>
        <taxon>Bacteria</taxon>
        <taxon>Bacillati</taxon>
        <taxon>Actinomycetota</taxon>
        <taxon>Actinomycetes</taxon>
        <taxon>Mycobacteriales</taxon>
        <taxon>Mycobacteriaceae</taxon>
        <taxon>Mycobacterium</taxon>
        <taxon>Mycobacterium tuberculosis complex</taxon>
    </lineage>
</organism>
<gene>
    <name evidence="2" type="primary">mshA</name>
    <name type="ordered locus">JTY_0497</name>
</gene>
<dbReference type="EC" id="2.4.1.250" evidence="2"/>
<dbReference type="EMBL" id="AP010918">
    <property type="protein sequence ID" value="BAH24793.1"/>
    <property type="molecule type" value="Genomic_DNA"/>
</dbReference>
<dbReference type="RefSeq" id="WP_003402367.1">
    <property type="nucleotide sequence ID" value="NZ_CP014566.1"/>
</dbReference>
<dbReference type="SMR" id="C1AKG4"/>
<dbReference type="CAZy" id="GT4">
    <property type="family name" value="Glycosyltransferase Family 4"/>
</dbReference>
<dbReference type="KEGG" id="mbt:JTY_0497"/>
<dbReference type="HOGENOM" id="CLU_009583_2_3_11"/>
<dbReference type="GO" id="GO:0008375">
    <property type="term" value="F:acetylglucosaminyltransferase activity"/>
    <property type="evidence" value="ECO:0007669"/>
    <property type="project" value="UniProtKB-UniRule"/>
</dbReference>
<dbReference type="GO" id="GO:0102710">
    <property type="term" value="F:D-inositol-3-phosphate glycosyltransferase activity"/>
    <property type="evidence" value="ECO:0007669"/>
    <property type="project" value="UniProtKB-EC"/>
</dbReference>
<dbReference type="GO" id="GO:0000287">
    <property type="term" value="F:magnesium ion binding"/>
    <property type="evidence" value="ECO:0007669"/>
    <property type="project" value="UniProtKB-UniRule"/>
</dbReference>
<dbReference type="GO" id="GO:0010125">
    <property type="term" value="P:mycothiol biosynthetic process"/>
    <property type="evidence" value="ECO:0007669"/>
    <property type="project" value="UniProtKB-UniRule"/>
</dbReference>
<dbReference type="CDD" id="cd03800">
    <property type="entry name" value="GT4_sucrose_synthase"/>
    <property type="match status" value="1"/>
</dbReference>
<dbReference type="FunFam" id="3.40.50.2000:FF:000265">
    <property type="entry name" value="D-inositol 3-phosphate glycosyltransferase"/>
    <property type="match status" value="1"/>
</dbReference>
<dbReference type="FunFam" id="3.40.50.2000:FF:000123">
    <property type="entry name" value="D-inositol-3-phosphate glycosyltransferase"/>
    <property type="match status" value="1"/>
</dbReference>
<dbReference type="Gene3D" id="3.40.50.2000">
    <property type="entry name" value="Glycogen Phosphorylase B"/>
    <property type="match status" value="2"/>
</dbReference>
<dbReference type="HAMAP" id="MF_01695">
    <property type="entry name" value="MshA"/>
    <property type="match status" value="1"/>
</dbReference>
<dbReference type="InterPro" id="IPR001296">
    <property type="entry name" value="Glyco_trans_1"/>
</dbReference>
<dbReference type="InterPro" id="IPR028098">
    <property type="entry name" value="Glyco_trans_4-like_N"/>
</dbReference>
<dbReference type="InterPro" id="IPR017814">
    <property type="entry name" value="Mycothiol_biosynthesis_MshA"/>
</dbReference>
<dbReference type="NCBIfam" id="TIGR03449">
    <property type="entry name" value="mycothiol_MshA"/>
    <property type="match status" value="1"/>
</dbReference>
<dbReference type="PANTHER" id="PTHR12526:SF510">
    <property type="entry name" value="D-INOSITOL 3-PHOSPHATE GLYCOSYLTRANSFERASE"/>
    <property type="match status" value="1"/>
</dbReference>
<dbReference type="PANTHER" id="PTHR12526">
    <property type="entry name" value="GLYCOSYLTRANSFERASE"/>
    <property type="match status" value="1"/>
</dbReference>
<dbReference type="Pfam" id="PF13579">
    <property type="entry name" value="Glyco_trans_4_4"/>
    <property type="match status" value="1"/>
</dbReference>
<dbReference type="Pfam" id="PF00534">
    <property type="entry name" value="Glycos_transf_1"/>
    <property type="match status" value="1"/>
</dbReference>
<dbReference type="SUPFAM" id="SSF53756">
    <property type="entry name" value="UDP-Glycosyltransferase/glycogen phosphorylase"/>
    <property type="match status" value="1"/>
</dbReference>
<reference key="1">
    <citation type="journal article" date="2009" name="Vaccine">
        <title>Whole genome sequence analysis of Mycobacterium bovis bacillus Calmette-Guerin (BCG) Tokyo 172: a comparative study of BCG vaccine substrains.</title>
        <authorList>
            <person name="Seki M."/>
            <person name="Honda I."/>
            <person name="Fujita I."/>
            <person name="Yano I."/>
            <person name="Yamamoto S."/>
            <person name="Koyama A."/>
        </authorList>
    </citation>
    <scope>NUCLEOTIDE SEQUENCE [LARGE SCALE GENOMIC DNA]</scope>
    <source>
        <strain>BCG / Tokyo 172 / ATCC 35737 / TMC 1019</strain>
    </source>
</reference>
<comment type="function">
    <text evidence="1 2">Catalyzes the transfer of a N-acetyl-glucosamine moiety to 1D-myo-inositol 3-phosphate to produce 1D-myo-inositol 2-acetamido-2-deoxy-glucopyranoside 3-phosphate in the mycothiol (MSH) biosynthesis pathway (By similarity). MSH and WhiB3 are probably part of a regulatory circuit that mediates gene expression upon acid stress (like that found in host macrophage phagosomes). MSH is one of the major redox buffers which protects bacteria against redox stressors and antibiotics; loss of MSH or ergothioneine (ERG, the other major redox buffer in this bacteria) leads to respiratory alterations and bioenergetic deficiencies that negatively impact virulence (By similarity).</text>
</comment>
<comment type="catalytic activity">
    <reaction evidence="2">
        <text>1D-myo-inositol 3-phosphate + UDP-N-acetyl-alpha-D-glucosamine = 1D-myo-inositol 2-acetamido-2-deoxy-alpha-D-glucopyranoside 3-phosphate + UDP + H(+)</text>
        <dbReference type="Rhea" id="RHEA:26188"/>
        <dbReference type="ChEBI" id="CHEBI:15378"/>
        <dbReference type="ChEBI" id="CHEBI:57705"/>
        <dbReference type="ChEBI" id="CHEBI:58223"/>
        <dbReference type="ChEBI" id="CHEBI:58401"/>
        <dbReference type="ChEBI" id="CHEBI:58892"/>
        <dbReference type="EC" id="2.4.1.250"/>
    </reaction>
</comment>
<comment type="subunit">
    <text evidence="2">Homodimer.</text>
</comment>
<comment type="similarity">
    <text evidence="2">Belongs to the glycosyltransferase group 1 family. MshA subfamily.</text>
</comment>
<evidence type="ECO:0000250" key="1">
    <source>
        <dbReference type="UniProtKB" id="P9WMY7"/>
    </source>
</evidence>
<evidence type="ECO:0000255" key="2">
    <source>
        <dbReference type="HAMAP-Rule" id="MF_01695"/>
    </source>
</evidence>
<evidence type="ECO:0000256" key="3">
    <source>
        <dbReference type="SAM" id="MobiDB-lite"/>
    </source>
</evidence>
<protein>
    <recommendedName>
        <fullName>D-inositol 3-phosphate glycosyltransferase</fullName>
        <ecNumber evidence="2">2.4.1.250</ecNumber>
    </recommendedName>
    <alternativeName>
        <fullName evidence="2">N-acetylglucosamine-inositol-phosphate N-acetylglucosaminyltransferase</fullName>
        <shortName evidence="2">GlcNAc-Ins-P N-acetylglucosaminyltransferase</shortName>
    </alternativeName>
</protein>
<keyword id="KW-0328">Glycosyltransferase</keyword>
<keyword id="KW-0460">Magnesium</keyword>
<keyword id="KW-0479">Metal-binding</keyword>
<keyword id="KW-0808">Transferase</keyword>
<sequence length="480" mass="50541">MAGVRHDDGSGLIAQRRPVRGEGATRSRGPSGPSNRNVSAADDPRRVALLAVHTSPLAQPGTGDAGGMNVYMLQSALHLARRGIEVEIFTRATASADPPVVRVAPGVLVRNVVAGPFEGLDKYDLPTQLCAFAAGVLRAEAVHEPGYYDIVHSHYWLSGQVGWLARDRWAVPLVHTAHTLAAVKNAALADGDGPEPPLRTVGEQQVVDEADRLIVNTDDEARQVISLHGADPARIDVVHPGVDLDVFRPGDRRAARAALGLPVDERVVAFVGRIQPLKAPDIVLRAAAKLPGVRIIVAGGPSGSGLASPDGLVRLADELGISARVTFLPPQSHTDLATLFRAADLVAVPSYSESFGLVAVEAQACGTPVVAAAVGGLPVAVRDGITGTLVSGHEVGQWADAIDHLLRLCAGPRGRVMSRAAARHAATFSWENTTDALLASYRRAIGEYNAERQRRGGEVISDLVAVGKPRHWTPRRGVGA</sequence>
<accession>C1AKG4</accession>
<name>MSHA_MYCBT</name>
<proteinExistence type="inferred from homology"/>
<feature type="chain" id="PRO_0000400133" description="D-inositol 3-phosphate glycosyltransferase">
    <location>
        <begin position="1"/>
        <end position="480"/>
    </location>
</feature>
<feature type="region of interest" description="Disordered" evidence="3">
    <location>
        <begin position="1"/>
        <end position="42"/>
    </location>
</feature>
<feature type="binding site" evidence="2">
    <location>
        <position position="53"/>
    </location>
    <ligand>
        <name>1D-myo-inositol 3-phosphate</name>
        <dbReference type="ChEBI" id="CHEBI:58401"/>
    </ligand>
</feature>
<feature type="binding site" evidence="2">
    <location>
        <begin position="59"/>
        <end position="60"/>
    </location>
    <ligand>
        <name>UDP-N-acetyl-alpha-D-glucosamine</name>
        <dbReference type="ChEBI" id="CHEBI:57705"/>
    </ligand>
</feature>
<feature type="binding site" evidence="2">
    <location>
        <begin position="64"/>
        <end position="69"/>
    </location>
    <ligand>
        <name>1D-myo-inositol 3-phosphate</name>
        <dbReference type="ChEBI" id="CHEBI:58401"/>
    </ligand>
</feature>
<feature type="binding site" evidence="2">
    <location>
        <position position="67"/>
    </location>
    <ligand>
        <name>UDP-N-acetyl-alpha-D-glucosamine</name>
        <dbReference type="ChEBI" id="CHEBI:57705"/>
    </ligand>
</feature>
<feature type="binding site" evidence="2">
    <location>
        <position position="122"/>
    </location>
    <ligand>
        <name>1D-myo-inositol 3-phosphate</name>
        <dbReference type="ChEBI" id="CHEBI:58401"/>
    </ligand>
</feature>
<feature type="binding site" evidence="2">
    <location>
        <position position="155"/>
    </location>
    <ligand>
        <name>1D-myo-inositol 3-phosphate</name>
        <dbReference type="ChEBI" id="CHEBI:58401"/>
    </ligand>
</feature>
<feature type="binding site" evidence="2">
    <location>
        <position position="179"/>
    </location>
    <ligand>
        <name>1D-myo-inositol 3-phosphate</name>
        <dbReference type="ChEBI" id="CHEBI:58401"/>
    </ligand>
</feature>
<feature type="binding site" evidence="2">
    <location>
        <position position="199"/>
    </location>
    <ligand>
        <name>1D-myo-inositol 3-phosphate</name>
        <dbReference type="ChEBI" id="CHEBI:58401"/>
    </ligand>
</feature>
<feature type="binding site" evidence="2">
    <location>
        <position position="273"/>
    </location>
    <ligand>
        <name>UDP-N-acetyl-alpha-D-glucosamine</name>
        <dbReference type="ChEBI" id="CHEBI:57705"/>
    </ligand>
</feature>
<feature type="binding site" evidence="2">
    <location>
        <position position="278"/>
    </location>
    <ligand>
        <name>UDP-N-acetyl-alpha-D-glucosamine</name>
        <dbReference type="ChEBI" id="CHEBI:57705"/>
    </ligand>
</feature>
<feature type="binding site" evidence="2">
    <location>
        <position position="331"/>
    </location>
    <ligand>
        <name>UDP-N-acetyl-alpha-D-glucosamine</name>
        <dbReference type="ChEBI" id="CHEBI:57705"/>
    </ligand>
</feature>
<feature type="binding site" evidence="2">
    <location>
        <position position="340"/>
    </location>
    <ligand>
        <name>Mg(2+)</name>
        <dbReference type="ChEBI" id="CHEBI:18420"/>
    </ligand>
</feature>
<feature type="binding site" evidence="2">
    <location>
        <position position="341"/>
    </location>
    <ligand>
        <name>Mg(2+)</name>
        <dbReference type="ChEBI" id="CHEBI:18420"/>
    </ligand>
</feature>
<feature type="binding site" evidence="2">
    <location>
        <position position="343"/>
    </location>
    <ligand>
        <name>Mg(2+)</name>
        <dbReference type="ChEBI" id="CHEBI:18420"/>
    </ligand>
</feature>
<feature type="binding site" evidence="2">
    <location>
        <position position="353"/>
    </location>
    <ligand>
        <name>UDP-N-acetyl-alpha-D-glucosamine</name>
        <dbReference type="ChEBI" id="CHEBI:57705"/>
    </ligand>
</feature>
<feature type="binding site" evidence="2">
    <location>
        <position position="361"/>
    </location>
    <ligand>
        <name>UDP-N-acetyl-alpha-D-glucosamine</name>
        <dbReference type="ChEBI" id="CHEBI:57705"/>
    </ligand>
</feature>
<feature type="binding site" evidence="2">
    <location>
        <position position="367"/>
    </location>
    <ligand>
        <name>Mg(2+)</name>
        <dbReference type="ChEBI" id="CHEBI:18420"/>
    </ligand>
</feature>